<evidence type="ECO:0000250" key="1"/>
<evidence type="ECO:0000255" key="2"/>
<evidence type="ECO:0000305" key="3"/>
<organism>
    <name type="scientific">Hypocrea jecorina</name>
    <name type="common">Trichoderma reesei</name>
    <dbReference type="NCBI Taxonomy" id="51453"/>
    <lineage>
        <taxon>Eukaryota</taxon>
        <taxon>Fungi</taxon>
        <taxon>Dikarya</taxon>
        <taxon>Ascomycota</taxon>
        <taxon>Pezizomycotina</taxon>
        <taxon>Sordariomycetes</taxon>
        <taxon>Hypocreomycetidae</taxon>
        <taxon>Hypocreales</taxon>
        <taxon>Hypocreaceae</taxon>
        <taxon>Trichoderma</taxon>
    </lineage>
</organism>
<comment type="function">
    <text evidence="1">Core subunit of the mitochondrial membrane respiratory chain NADH dehydrogenase (Complex I) that is believed to belong to the minimal assembly required for catalysis. Complex I functions in the transfer of electrons from NADH to the respiratory chain. The immediate electron acceptor for the enzyme is believed to be ubiquinone (By similarity).</text>
</comment>
<comment type="catalytic activity">
    <reaction>
        <text>a ubiquinone + NADH + 5 H(+)(in) = a ubiquinol + NAD(+) + 4 H(+)(out)</text>
        <dbReference type="Rhea" id="RHEA:29091"/>
        <dbReference type="Rhea" id="RHEA-COMP:9565"/>
        <dbReference type="Rhea" id="RHEA-COMP:9566"/>
        <dbReference type="ChEBI" id="CHEBI:15378"/>
        <dbReference type="ChEBI" id="CHEBI:16389"/>
        <dbReference type="ChEBI" id="CHEBI:17976"/>
        <dbReference type="ChEBI" id="CHEBI:57540"/>
        <dbReference type="ChEBI" id="CHEBI:57945"/>
        <dbReference type="EC" id="7.1.1.2"/>
    </reaction>
</comment>
<comment type="subcellular location">
    <subcellularLocation>
        <location evidence="1">Mitochondrion inner membrane</location>
        <topology evidence="1">Multi-pass membrane protein</topology>
    </subcellularLocation>
</comment>
<comment type="similarity">
    <text evidence="3">Belongs to the complex I subunit 5 family.</text>
</comment>
<dbReference type="EC" id="7.1.1.2"/>
<dbReference type="EMBL" id="AF447590">
    <property type="protein sequence ID" value="AAL74164.1"/>
    <property type="molecule type" value="Genomic_DNA"/>
</dbReference>
<dbReference type="RefSeq" id="NP_570156.1">
    <property type="nucleotide sequence ID" value="NC_003388.1"/>
</dbReference>
<dbReference type="SMR" id="Q8SHP7"/>
<dbReference type="GeneID" id="804634"/>
<dbReference type="GO" id="GO:0005743">
    <property type="term" value="C:mitochondrial inner membrane"/>
    <property type="evidence" value="ECO:0007669"/>
    <property type="project" value="UniProtKB-SubCell"/>
</dbReference>
<dbReference type="GO" id="GO:0008137">
    <property type="term" value="F:NADH dehydrogenase (ubiquinone) activity"/>
    <property type="evidence" value="ECO:0007669"/>
    <property type="project" value="UniProtKB-EC"/>
</dbReference>
<dbReference type="GO" id="GO:0042773">
    <property type="term" value="P:ATP synthesis coupled electron transport"/>
    <property type="evidence" value="ECO:0007669"/>
    <property type="project" value="InterPro"/>
</dbReference>
<dbReference type="GO" id="GO:0015990">
    <property type="term" value="P:electron transport coupled proton transport"/>
    <property type="evidence" value="ECO:0007669"/>
    <property type="project" value="TreeGrafter"/>
</dbReference>
<dbReference type="Gene3D" id="1.20.5.2700">
    <property type="match status" value="1"/>
</dbReference>
<dbReference type="InterPro" id="IPR018393">
    <property type="entry name" value="NADHpl_OxRdtase_5_subgr"/>
</dbReference>
<dbReference type="InterPro" id="IPR001750">
    <property type="entry name" value="ND/Mrp_TM"/>
</dbReference>
<dbReference type="InterPro" id="IPR003945">
    <property type="entry name" value="NU5C-like"/>
</dbReference>
<dbReference type="InterPro" id="IPR001516">
    <property type="entry name" value="Proton_antipo_N"/>
</dbReference>
<dbReference type="NCBIfam" id="TIGR01974">
    <property type="entry name" value="NDH_I_L"/>
    <property type="match status" value="1"/>
</dbReference>
<dbReference type="NCBIfam" id="NF005141">
    <property type="entry name" value="PRK06590.1"/>
    <property type="match status" value="1"/>
</dbReference>
<dbReference type="PANTHER" id="PTHR42829">
    <property type="entry name" value="NADH-UBIQUINONE OXIDOREDUCTASE CHAIN 5"/>
    <property type="match status" value="1"/>
</dbReference>
<dbReference type="PANTHER" id="PTHR42829:SF2">
    <property type="entry name" value="NADH-UBIQUINONE OXIDOREDUCTASE CHAIN 5"/>
    <property type="match status" value="1"/>
</dbReference>
<dbReference type="Pfam" id="PF00361">
    <property type="entry name" value="Proton_antipo_M"/>
    <property type="match status" value="1"/>
</dbReference>
<dbReference type="Pfam" id="PF00662">
    <property type="entry name" value="Proton_antipo_N"/>
    <property type="match status" value="1"/>
</dbReference>
<dbReference type="PRINTS" id="PR01434">
    <property type="entry name" value="NADHDHGNASE5"/>
</dbReference>
<geneLocation type="mitochondrion"/>
<sequence length="692" mass="77172">MYLSIIILPLLGSIVSGFFGRKVGVTGSRILGCLSIITTTILAIISFFEVGFNNNPISINLFKWLDSESFNMVWNFQFDSLTVSMLIPVLVISSLVHFYSIGYMSHDPHSQRFFSYLSLFTFMMIILVTGNNYLLMFVGWEGVGVCSYLLVSFWFTRIAANQSSLSAFLTNRVGDCFLTIGMFVILWSLGNLDYSTVFSLAPYINENIITIIGICLLIGAMAKSSQVGLHIWLPMAMEGPTPVSALIHAATMVTAGVYLLIRSSPLIEYSSTVLLICLWLGAVTTVFSSLIGLFQQDIKKIIAYSTMSQLGMMVIAIGLSSYNVAIFHLINHAFYKGLLFLGAGAVIHAVVDNQDLRKYGGLISFLPLTYTVILIASLSLVAFPFMTGFFSKDFILESAYGQYHFSSINVYFIATIGAVFTTLYSVKVIYLTFLANPNGSVNYYKNAHEGDIFLSLPLVILAIFSIYFGYLTKDIYIGLGSGFFIDNSIFIHPMREILIDTEFGVPTIFKLLPFFLTIFFSVLSIVYYEYMPKVVVDFNLTNLGYYIYGFFNQRFLVEFFYNKYIVNTVLDLGGQTTKILDKGSVEWIGPYGFGIALVKASKTVSGLGKGVVTDYALYILIGACFYLSIFTFISIFFDLANSITLSCVLVLLGVNNYVKLNKNDNINENSLTSSFLWSNTKEMSKYTTKIII</sequence>
<accession>Q8SHP7</accession>
<proteinExistence type="inferred from homology"/>
<reference key="1">
    <citation type="journal article" date="2002" name="J. Biol. Chem.">
        <title>Elucidation of the metabolic fate of glucose in the filamentous fungus Trichoderma reesei using expressed sequence tag (EST) analysis and cDNA microarrays.</title>
        <authorList>
            <person name="Chambergo F.S."/>
            <person name="Bonaccorsi E.D."/>
            <person name="Ferreira A.J.S."/>
            <person name="Ramos A.S.P."/>
            <person name="Ferreira J.R. Jr."/>
            <person name="Abrahao-Neto J."/>
            <person name="Farah J.P.S."/>
            <person name="El-Dorry H."/>
        </authorList>
    </citation>
    <scope>NUCLEOTIDE SEQUENCE [GENOMIC DNA]</scope>
</reference>
<feature type="chain" id="PRO_0000118157" description="NADH-ubiquinone oxidoreductase chain 5">
    <location>
        <begin position="1"/>
        <end position="692"/>
    </location>
</feature>
<feature type="transmembrane region" description="Helical" evidence="2">
    <location>
        <begin position="5"/>
        <end position="23"/>
    </location>
</feature>
<feature type="transmembrane region" description="Helical" evidence="2">
    <location>
        <begin position="30"/>
        <end position="52"/>
    </location>
</feature>
<feature type="transmembrane region" description="Helical" evidence="2">
    <location>
        <begin position="81"/>
        <end position="103"/>
    </location>
</feature>
<feature type="transmembrane region" description="Helical" evidence="2">
    <location>
        <begin position="112"/>
        <end position="129"/>
    </location>
</feature>
<feature type="transmembrane region" description="Helical" evidence="2">
    <location>
        <begin position="133"/>
        <end position="155"/>
    </location>
</feature>
<feature type="transmembrane region" description="Helical" evidence="2">
    <location>
        <begin position="168"/>
        <end position="190"/>
    </location>
</feature>
<feature type="transmembrane region" description="Helical" evidence="2">
    <location>
        <begin position="200"/>
        <end position="222"/>
    </location>
</feature>
<feature type="transmembrane region" description="Helical" evidence="2">
    <location>
        <begin position="243"/>
        <end position="262"/>
    </location>
</feature>
<feature type="transmembrane region" description="Helical" evidence="2">
    <location>
        <begin position="272"/>
        <end position="294"/>
    </location>
</feature>
<feature type="transmembrane region" description="Helical" evidence="2">
    <location>
        <begin position="301"/>
        <end position="319"/>
    </location>
</feature>
<feature type="transmembrane region" description="Helical" evidence="2">
    <location>
        <begin position="329"/>
        <end position="351"/>
    </location>
</feature>
<feature type="transmembrane region" description="Helical" evidence="2">
    <location>
        <begin position="364"/>
        <end position="386"/>
    </location>
</feature>
<feature type="transmembrane region" description="Helical" evidence="2">
    <location>
        <begin position="409"/>
        <end position="431"/>
    </location>
</feature>
<feature type="transmembrane region" description="Helical" evidence="2">
    <location>
        <begin position="452"/>
        <end position="471"/>
    </location>
</feature>
<feature type="transmembrane region" description="Helical" evidence="2">
    <location>
        <begin position="511"/>
        <end position="528"/>
    </location>
</feature>
<feature type="transmembrane region" description="Helical" evidence="2">
    <location>
        <begin position="535"/>
        <end position="557"/>
    </location>
</feature>
<feature type="transmembrane region" description="Helical" evidence="2">
    <location>
        <begin position="615"/>
        <end position="637"/>
    </location>
</feature>
<name>NU5M_HYPJE</name>
<gene>
    <name type="primary">nd5</name>
</gene>
<protein>
    <recommendedName>
        <fullName>NADH-ubiquinone oxidoreductase chain 5</fullName>
        <ecNumber>7.1.1.2</ecNumber>
    </recommendedName>
</protein>
<keyword id="KW-0249">Electron transport</keyword>
<keyword id="KW-0472">Membrane</keyword>
<keyword id="KW-0496">Mitochondrion</keyword>
<keyword id="KW-0999">Mitochondrion inner membrane</keyword>
<keyword id="KW-0520">NAD</keyword>
<keyword id="KW-0679">Respiratory chain</keyword>
<keyword id="KW-1278">Translocase</keyword>
<keyword id="KW-0812">Transmembrane</keyword>
<keyword id="KW-1133">Transmembrane helix</keyword>
<keyword id="KW-0813">Transport</keyword>
<keyword id="KW-0830">Ubiquinone</keyword>